<sequence>MIENRRGLDIFSHVMLIVGILAVLFPLYVGFVAATLDNQEVFQAPMTLIPGSHLWGNLRDIWLHGAGNNTTPFGLMLLNSFVMALAITVGKITVSILSAYAIVYFRFPLRNLFFWMIFLTLMLPVEVRIFPTVEVIARLDMMDSYTGLTLPLMASATATFLFRQFFMTLPDELMEAARIDGASPMRFFFDMVLPLSKTNLAALFVITFIYGWNQYLWPLLIVSDANLGTAVAGIKSMIASGDGATQWNQVMAAMLLTMLPPLLVVLLMQRWFVRGLVDSEK</sequence>
<feature type="chain" id="PRO_0000292680" description="sn-glycerol-3-phosphate transport system permease protein UgpE">
    <location>
        <begin position="1"/>
        <end position="281"/>
    </location>
</feature>
<feature type="transmembrane region" description="Helical" evidence="3">
    <location>
        <begin position="14"/>
        <end position="34"/>
    </location>
</feature>
<feature type="transmembrane region" description="Helical" evidence="3">
    <location>
        <begin position="85"/>
        <end position="105"/>
    </location>
</feature>
<feature type="transmembrane region" description="Helical" evidence="3">
    <location>
        <begin position="113"/>
        <end position="133"/>
    </location>
</feature>
<feature type="transmembrane region" description="Helical" evidence="3">
    <location>
        <begin position="142"/>
        <end position="162"/>
    </location>
</feature>
<feature type="transmembrane region" description="Helical" evidence="3">
    <location>
        <begin position="188"/>
        <end position="210"/>
    </location>
</feature>
<feature type="transmembrane region" description="Helical" evidence="3">
    <location>
        <begin position="247"/>
        <end position="267"/>
    </location>
</feature>
<feature type="domain" description="ABC transmembrane type-1" evidence="3">
    <location>
        <begin position="77"/>
        <end position="268"/>
    </location>
</feature>
<comment type="function">
    <text evidence="1">Part of the ABC transporter complex UgpBAEC involved in sn-glycerol-3-phosphate (G3P) import. Probably responsible for the translocation of the substrate across the membrane.</text>
</comment>
<comment type="subunit">
    <text evidence="1">The complex is composed of two ATP-binding proteins (UgpC), two transmembrane proteins (UgpA and UgpE) and a solute-binding protein (UgpB).</text>
</comment>
<comment type="subcellular location">
    <subcellularLocation>
        <location evidence="1">Cell inner membrane</location>
        <topology evidence="2">Multi-pass membrane protein</topology>
    </subcellularLocation>
</comment>
<comment type="similarity">
    <text evidence="4">Belongs to the binding-protein-dependent transport system permease family. UgpAE subfamily.</text>
</comment>
<comment type="sequence caution" evidence="4">
    <conflict type="erroneous initiation">
        <sequence resource="EMBL-CDS" id="CAG77217"/>
    </conflict>
</comment>
<accession>Q6CZ33</accession>
<proteinExistence type="inferred from homology"/>
<reference key="1">
    <citation type="journal article" date="2004" name="Proc. Natl. Acad. Sci. U.S.A.">
        <title>Genome sequence of the enterobacterial phytopathogen Erwinia carotovora subsp. atroseptica and characterization of virulence factors.</title>
        <authorList>
            <person name="Bell K.S."/>
            <person name="Sebaihia M."/>
            <person name="Pritchard L."/>
            <person name="Holden M.T.G."/>
            <person name="Hyman L.J."/>
            <person name="Holeva M.C."/>
            <person name="Thomson N.R."/>
            <person name="Bentley S.D."/>
            <person name="Churcher L.J.C."/>
            <person name="Mungall K."/>
            <person name="Atkin R."/>
            <person name="Bason N."/>
            <person name="Brooks K."/>
            <person name="Chillingworth T."/>
            <person name="Clark K."/>
            <person name="Doggett J."/>
            <person name="Fraser A."/>
            <person name="Hance Z."/>
            <person name="Hauser H."/>
            <person name="Jagels K."/>
            <person name="Moule S."/>
            <person name="Norbertczak H."/>
            <person name="Ormond D."/>
            <person name="Price C."/>
            <person name="Quail M.A."/>
            <person name="Sanders M."/>
            <person name="Walker D."/>
            <person name="Whitehead S."/>
            <person name="Salmond G.P.C."/>
            <person name="Birch P.R.J."/>
            <person name="Parkhill J."/>
            <person name="Toth I.K."/>
        </authorList>
    </citation>
    <scope>NUCLEOTIDE SEQUENCE [LARGE SCALE GENOMIC DNA]</scope>
    <source>
        <strain>SCRI 1043 / ATCC BAA-672</strain>
    </source>
</reference>
<protein>
    <recommendedName>
        <fullName evidence="1">sn-glycerol-3-phosphate transport system permease protein UgpE</fullName>
    </recommendedName>
</protein>
<evidence type="ECO:0000250" key="1">
    <source>
        <dbReference type="UniProtKB" id="P10906"/>
    </source>
</evidence>
<evidence type="ECO:0000255" key="2"/>
<evidence type="ECO:0000255" key="3">
    <source>
        <dbReference type="PROSITE-ProRule" id="PRU00441"/>
    </source>
</evidence>
<evidence type="ECO:0000305" key="4"/>
<organism>
    <name type="scientific">Pectobacterium atrosepticum (strain SCRI 1043 / ATCC BAA-672)</name>
    <name type="common">Erwinia carotovora subsp. atroseptica</name>
    <dbReference type="NCBI Taxonomy" id="218491"/>
    <lineage>
        <taxon>Bacteria</taxon>
        <taxon>Pseudomonadati</taxon>
        <taxon>Pseudomonadota</taxon>
        <taxon>Gammaproteobacteria</taxon>
        <taxon>Enterobacterales</taxon>
        <taxon>Pectobacteriaceae</taxon>
        <taxon>Pectobacterium</taxon>
    </lineage>
</organism>
<dbReference type="EMBL" id="BX950851">
    <property type="protein sequence ID" value="CAG77217.1"/>
    <property type="status" value="ALT_INIT"/>
    <property type="molecule type" value="Genomic_DNA"/>
</dbReference>
<dbReference type="RefSeq" id="WP_039295339.1">
    <property type="nucleotide sequence ID" value="NC_004547.2"/>
</dbReference>
<dbReference type="SMR" id="Q6CZ33"/>
<dbReference type="STRING" id="218491.ECA4320"/>
<dbReference type="GeneID" id="57211014"/>
<dbReference type="KEGG" id="eca:ECA4320"/>
<dbReference type="PATRIC" id="fig|218491.5.peg.4400"/>
<dbReference type="eggNOG" id="COG0395">
    <property type="taxonomic scope" value="Bacteria"/>
</dbReference>
<dbReference type="HOGENOM" id="CLU_016047_1_1_6"/>
<dbReference type="OrthoDB" id="369039at2"/>
<dbReference type="Proteomes" id="UP000007966">
    <property type="component" value="Chromosome"/>
</dbReference>
<dbReference type="GO" id="GO:0005886">
    <property type="term" value="C:plasma membrane"/>
    <property type="evidence" value="ECO:0007669"/>
    <property type="project" value="UniProtKB-SubCell"/>
</dbReference>
<dbReference type="GO" id="GO:0055085">
    <property type="term" value="P:transmembrane transport"/>
    <property type="evidence" value="ECO:0007669"/>
    <property type="project" value="InterPro"/>
</dbReference>
<dbReference type="CDD" id="cd06261">
    <property type="entry name" value="TM_PBP2"/>
    <property type="match status" value="1"/>
</dbReference>
<dbReference type="FunFam" id="1.10.3720.10:FF:000042">
    <property type="entry name" value="sn-glycerol-3-phosphate transport system permease protein UgpE"/>
    <property type="match status" value="1"/>
</dbReference>
<dbReference type="Gene3D" id="1.10.3720.10">
    <property type="entry name" value="MetI-like"/>
    <property type="match status" value="1"/>
</dbReference>
<dbReference type="InterPro" id="IPR000515">
    <property type="entry name" value="MetI-like"/>
</dbReference>
<dbReference type="InterPro" id="IPR035906">
    <property type="entry name" value="MetI-like_sf"/>
</dbReference>
<dbReference type="NCBIfam" id="NF008210">
    <property type="entry name" value="PRK10973.1"/>
    <property type="match status" value="1"/>
</dbReference>
<dbReference type="PANTHER" id="PTHR43744">
    <property type="entry name" value="ABC TRANSPORTER PERMEASE PROTEIN MG189-RELATED-RELATED"/>
    <property type="match status" value="1"/>
</dbReference>
<dbReference type="PANTHER" id="PTHR43744:SF8">
    <property type="entry name" value="SN-GLYCEROL-3-PHOSPHATE TRANSPORT SYSTEM PERMEASE PROTEIN UGPE"/>
    <property type="match status" value="1"/>
</dbReference>
<dbReference type="Pfam" id="PF00528">
    <property type="entry name" value="BPD_transp_1"/>
    <property type="match status" value="1"/>
</dbReference>
<dbReference type="SUPFAM" id="SSF161098">
    <property type="entry name" value="MetI-like"/>
    <property type="match status" value="1"/>
</dbReference>
<dbReference type="PROSITE" id="PS50928">
    <property type="entry name" value="ABC_TM1"/>
    <property type="match status" value="1"/>
</dbReference>
<name>UGPE_PECAS</name>
<keyword id="KW-0997">Cell inner membrane</keyword>
<keyword id="KW-1003">Cell membrane</keyword>
<keyword id="KW-0472">Membrane</keyword>
<keyword id="KW-1185">Reference proteome</keyword>
<keyword id="KW-0812">Transmembrane</keyword>
<keyword id="KW-1133">Transmembrane helix</keyword>
<keyword id="KW-0813">Transport</keyword>
<gene>
    <name type="primary">ugpE</name>
    <name type="ordered locus">ECA4320</name>
</gene>